<proteinExistence type="inferred from homology"/>
<protein>
    <recommendedName>
        <fullName evidence="1">tRNA uridine 5-carboxymethylaminomethyl modification enzyme MnmG</fullName>
    </recommendedName>
    <alternativeName>
        <fullName evidence="1">Glucose-inhibited division protein A</fullName>
    </alternativeName>
</protein>
<evidence type="ECO:0000255" key="1">
    <source>
        <dbReference type="HAMAP-Rule" id="MF_00129"/>
    </source>
</evidence>
<feature type="chain" id="PRO_1000016670" description="tRNA uridine 5-carboxymethylaminomethyl modification enzyme MnmG">
    <location>
        <begin position="1"/>
        <end position="629"/>
    </location>
</feature>
<feature type="binding site" evidence="1">
    <location>
        <begin position="13"/>
        <end position="18"/>
    </location>
    <ligand>
        <name>FAD</name>
        <dbReference type="ChEBI" id="CHEBI:57692"/>
    </ligand>
</feature>
<feature type="binding site" evidence="1">
    <location>
        <begin position="273"/>
        <end position="287"/>
    </location>
    <ligand>
        <name>NAD(+)</name>
        <dbReference type="ChEBI" id="CHEBI:57540"/>
    </ligand>
</feature>
<reference key="1">
    <citation type="submission" date="2007-07" db="EMBL/GenBank/DDBJ databases">
        <title>Complete sequence of chromosome of Shewanella baltica OS185.</title>
        <authorList>
            <consortium name="US DOE Joint Genome Institute"/>
            <person name="Copeland A."/>
            <person name="Lucas S."/>
            <person name="Lapidus A."/>
            <person name="Barry K."/>
            <person name="Glavina del Rio T."/>
            <person name="Dalin E."/>
            <person name="Tice H."/>
            <person name="Pitluck S."/>
            <person name="Sims D."/>
            <person name="Brettin T."/>
            <person name="Bruce D."/>
            <person name="Detter J.C."/>
            <person name="Han C."/>
            <person name="Schmutz J."/>
            <person name="Larimer F."/>
            <person name="Land M."/>
            <person name="Hauser L."/>
            <person name="Kyrpides N."/>
            <person name="Mikhailova N."/>
            <person name="Brettar I."/>
            <person name="Rodrigues J."/>
            <person name="Konstantinidis K."/>
            <person name="Tiedje J."/>
            <person name="Richardson P."/>
        </authorList>
    </citation>
    <scope>NUCLEOTIDE SEQUENCE [LARGE SCALE GENOMIC DNA]</scope>
    <source>
        <strain>OS185</strain>
    </source>
</reference>
<accession>A6WUK1</accession>
<organism>
    <name type="scientific">Shewanella baltica (strain OS185)</name>
    <dbReference type="NCBI Taxonomy" id="402882"/>
    <lineage>
        <taxon>Bacteria</taxon>
        <taxon>Pseudomonadati</taxon>
        <taxon>Pseudomonadota</taxon>
        <taxon>Gammaproteobacteria</taxon>
        <taxon>Alteromonadales</taxon>
        <taxon>Shewanellaceae</taxon>
        <taxon>Shewanella</taxon>
    </lineage>
</organism>
<keyword id="KW-0963">Cytoplasm</keyword>
<keyword id="KW-0274">FAD</keyword>
<keyword id="KW-0285">Flavoprotein</keyword>
<keyword id="KW-0520">NAD</keyword>
<keyword id="KW-0819">tRNA processing</keyword>
<comment type="function">
    <text evidence="1">NAD-binding protein involved in the addition of a carboxymethylaminomethyl (cmnm) group at the wobble position (U34) of certain tRNAs, forming tRNA-cmnm(5)s(2)U34.</text>
</comment>
<comment type="cofactor">
    <cofactor evidence="1">
        <name>FAD</name>
        <dbReference type="ChEBI" id="CHEBI:57692"/>
    </cofactor>
</comment>
<comment type="subunit">
    <text evidence="1">Homodimer. Heterotetramer of two MnmE and two MnmG subunits.</text>
</comment>
<comment type="subcellular location">
    <subcellularLocation>
        <location evidence="1">Cytoplasm</location>
    </subcellularLocation>
</comment>
<comment type="similarity">
    <text evidence="1">Belongs to the MnmG family.</text>
</comment>
<sequence length="629" mass="69401">MHFHERFDVIVVGGGHAGTEAALAAARMGSKTLLLTHNIDTLGQMSCNPAIGGIGKGHLVKEIDALGGAMAIATDYAGIQFRTLNSSKGPAVRATRAQADRALYRQKIQNILQNQPNLRIFQQAVDDLIVENHQVVGVVTQMGLAFESPAVVLTTGTFLSGKIHIGLENYSGGRAGDPPAIALANRLRELPIRVGRLKTGTPPRIDANTIDFSQMTEQKGDSPLPVMSFMGDVSHHPKQISCWITHTNEKTHEIIRGGLDRSPMYSGVIEGIGPRYCPSIEDKIHRFADKSSHQIFIEPEGLNTNEIYPNGISTSLPFDVQLNLVRSIKGMENAEIMRPGYAIEYDYFDPRDLKNSLETKAINGLFFAGQINGTTGYEEAGAQGLLAGMNASLQVQGKEAWCPRRDEAYLGVLVDDLSTLGTKEPYRMFTSRAEYRLLLREDNADIRLTAKGRELGLVDDARWAEFSEKLESIELELQRLRGQWVHPNSPLIHALNPHLNTPISREASFEELLRRPEMDYSKLMQIEGFGPGLEDPQAAEQVQIQVKYSGYIQRQQEEINKAVRNENTGLPLTLDYKEVPGLSNEVIAKLNNHKPETIGQASRISGITPAAISILLVHLKKRGLLRKSA</sequence>
<dbReference type="EMBL" id="CP000753">
    <property type="protein sequence ID" value="ABS10490.1"/>
    <property type="molecule type" value="Genomic_DNA"/>
</dbReference>
<dbReference type="RefSeq" id="WP_012090675.1">
    <property type="nucleotide sequence ID" value="NC_009665.1"/>
</dbReference>
<dbReference type="SMR" id="A6WUK1"/>
<dbReference type="KEGG" id="sbm:Shew185_4376"/>
<dbReference type="HOGENOM" id="CLU_007831_2_2_6"/>
<dbReference type="GO" id="GO:0005829">
    <property type="term" value="C:cytosol"/>
    <property type="evidence" value="ECO:0007669"/>
    <property type="project" value="TreeGrafter"/>
</dbReference>
<dbReference type="GO" id="GO:0050660">
    <property type="term" value="F:flavin adenine dinucleotide binding"/>
    <property type="evidence" value="ECO:0007669"/>
    <property type="project" value="UniProtKB-UniRule"/>
</dbReference>
<dbReference type="GO" id="GO:0030488">
    <property type="term" value="P:tRNA methylation"/>
    <property type="evidence" value="ECO:0007669"/>
    <property type="project" value="TreeGrafter"/>
</dbReference>
<dbReference type="GO" id="GO:0002098">
    <property type="term" value="P:tRNA wobble uridine modification"/>
    <property type="evidence" value="ECO:0007669"/>
    <property type="project" value="InterPro"/>
</dbReference>
<dbReference type="FunFam" id="1.10.10.1800:FF:000001">
    <property type="entry name" value="tRNA uridine 5-carboxymethylaminomethyl modification enzyme MnmG"/>
    <property type="match status" value="1"/>
</dbReference>
<dbReference type="FunFam" id="1.10.150.570:FF:000001">
    <property type="entry name" value="tRNA uridine 5-carboxymethylaminomethyl modification enzyme MnmG"/>
    <property type="match status" value="1"/>
</dbReference>
<dbReference type="FunFam" id="3.50.50.60:FF:000002">
    <property type="entry name" value="tRNA uridine 5-carboxymethylaminomethyl modification enzyme MnmG"/>
    <property type="match status" value="1"/>
</dbReference>
<dbReference type="FunFam" id="3.50.50.60:FF:000010">
    <property type="entry name" value="tRNA uridine 5-carboxymethylaminomethyl modification enzyme MnmG"/>
    <property type="match status" value="1"/>
</dbReference>
<dbReference type="Gene3D" id="3.50.50.60">
    <property type="entry name" value="FAD/NAD(P)-binding domain"/>
    <property type="match status" value="2"/>
</dbReference>
<dbReference type="Gene3D" id="1.10.150.570">
    <property type="entry name" value="GidA associated domain, C-terminal subdomain"/>
    <property type="match status" value="1"/>
</dbReference>
<dbReference type="Gene3D" id="1.10.10.1800">
    <property type="entry name" value="tRNA uridine 5-carboxymethylaminomethyl modification enzyme MnmG/GidA"/>
    <property type="match status" value="1"/>
</dbReference>
<dbReference type="HAMAP" id="MF_00129">
    <property type="entry name" value="MnmG_GidA"/>
    <property type="match status" value="1"/>
</dbReference>
<dbReference type="InterPro" id="IPR036188">
    <property type="entry name" value="FAD/NAD-bd_sf"/>
</dbReference>
<dbReference type="InterPro" id="IPR049312">
    <property type="entry name" value="GIDA_C_N"/>
</dbReference>
<dbReference type="InterPro" id="IPR004416">
    <property type="entry name" value="MnmG"/>
</dbReference>
<dbReference type="InterPro" id="IPR002218">
    <property type="entry name" value="MnmG-rel"/>
</dbReference>
<dbReference type="InterPro" id="IPR020595">
    <property type="entry name" value="MnmG-rel_CS"/>
</dbReference>
<dbReference type="InterPro" id="IPR026904">
    <property type="entry name" value="MnmG_C"/>
</dbReference>
<dbReference type="InterPro" id="IPR047001">
    <property type="entry name" value="MnmG_C_subdom"/>
</dbReference>
<dbReference type="InterPro" id="IPR044920">
    <property type="entry name" value="MnmG_C_subdom_sf"/>
</dbReference>
<dbReference type="InterPro" id="IPR040131">
    <property type="entry name" value="MnmG_N"/>
</dbReference>
<dbReference type="NCBIfam" id="TIGR00136">
    <property type="entry name" value="mnmG_gidA"/>
    <property type="match status" value="1"/>
</dbReference>
<dbReference type="PANTHER" id="PTHR11806">
    <property type="entry name" value="GLUCOSE INHIBITED DIVISION PROTEIN A"/>
    <property type="match status" value="1"/>
</dbReference>
<dbReference type="PANTHER" id="PTHR11806:SF0">
    <property type="entry name" value="PROTEIN MTO1 HOMOLOG, MITOCHONDRIAL"/>
    <property type="match status" value="1"/>
</dbReference>
<dbReference type="Pfam" id="PF01134">
    <property type="entry name" value="GIDA"/>
    <property type="match status" value="1"/>
</dbReference>
<dbReference type="Pfam" id="PF21680">
    <property type="entry name" value="GIDA_C_1st"/>
    <property type="match status" value="1"/>
</dbReference>
<dbReference type="Pfam" id="PF13932">
    <property type="entry name" value="SAM_GIDA_C"/>
    <property type="match status" value="1"/>
</dbReference>
<dbReference type="SMART" id="SM01228">
    <property type="entry name" value="GIDA_assoc_3"/>
    <property type="match status" value="1"/>
</dbReference>
<dbReference type="SUPFAM" id="SSF51905">
    <property type="entry name" value="FAD/NAD(P)-binding domain"/>
    <property type="match status" value="1"/>
</dbReference>
<dbReference type="PROSITE" id="PS01280">
    <property type="entry name" value="GIDA_1"/>
    <property type="match status" value="1"/>
</dbReference>
<dbReference type="PROSITE" id="PS01281">
    <property type="entry name" value="GIDA_2"/>
    <property type="match status" value="1"/>
</dbReference>
<gene>
    <name evidence="1" type="primary">mnmG</name>
    <name evidence="1" type="synonym">gidA</name>
    <name type="ordered locus">Shew185_4376</name>
</gene>
<name>MNMG_SHEB8</name>